<evidence type="ECO:0000255" key="1">
    <source>
        <dbReference type="HAMAP-Rule" id="MF_01875"/>
    </source>
</evidence>
<evidence type="ECO:0000256" key="2">
    <source>
        <dbReference type="SAM" id="MobiDB-lite"/>
    </source>
</evidence>
<name>KU_DESHD</name>
<accession>B8FRH5</accession>
<protein>
    <recommendedName>
        <fullName evidence="1">Non-homologous end joining protein Ku</fullName>
    </recommendedName>
</protein>
<organism>
    <name type="scientific">Desulfitobacterium hafniense (strain DSM 10664 / DCB-2)</name>
    <dbReference type="NCBI Taxonomy" id="272564"/>
    <lineage>
        <taxon>Bacteria</taxon>
        <taxon>Bacillati</taxon>
        <taxon>Bacillota</taxon>
        <taxon>Clostridia</taxon>
        <taxon>Eubacteriales</taxon>
        <taxon>Desulfitobacteriaceae</taxon>
        <taxon>Desulfitobacterium</taxon>
    </lineage>
</organism>
<comment type="function">
    <text evidence="1">With LigD forms a non-homologous end joining (NHEJ) DNA repair enzyme, which repairs dsDNA breaks with reduced fidelity. Binds linear dsDNA with 5'- and 3'- overhangs but not closed circular dsDNA nor ssDNA. Recruits and stimulates the ligase activity of LigD.</text>
</comment>
<comment type="subunit">
    <text evidence="1">Homodimer. Interacts with LigD.</text>
</comment>
<comment type="similarity">
    <text evidence="1">Belongs to the prokaryotic Ku family.</text>
</comment>
<dbReference type="EMBL" id="CP001336">
    <property type="protein sequence ID" value="ACL21735.1"/>
    <property type="molecule type" value="Genomic_DNA"/>
</dbReference>
<dbReference type="RefSeq" id="WP_005813277.1">
    <property type="nucleotide sequence ID" value="NC_011830.1"/>
</dbReference>
<dbReference type="SMR" id="B8FRH5"/>
<dbReference type="KEGG" id="dhd:Dhaf_3719"/>
<dbReference type="HOGENOM" id="CLU_048975_1_0_9"/>
<dbReference type="Proteomes" id="UP000007726">
    <property type="component" value="Chromosome"/>
</dbReference>
<dbReference type="GO" id="GO:0003690">
    <property type="term" value="F:double-stranded DNA binding"/>
    <property type="evidence" value="ECO:0007669"/>
    <property type="project" value="UniProtKB-UniRule"/>
</dbReference>
<dbReference type="GO" id="GO:0006310">
    <property type="term" value="P:DNA recombination"/>
    <property type="evidence" value="ECO:0007669"/>
    <property type="project" value="UniProtKB-KW"/>
</dbReference>
<dbReference type="GO" id="GO:0006303">
    <property type="term" value="P:double-strand break repair via nonhomologous end joining"/>
    <property type="evidence" value="ECO:0007669"/>
    <property type="project" value="UniProtKB-UniRule"/>
</dbReference>
<dbReference type="CDD" id="cd00789">
    <property type="entry name" value="KU_like"/>
    <property type="match status" value="1"/>
</dbReference>
<dbReference type="FunFam" id="2.40.290.10:FF:000004">
    <property type="entry name" value="Non-homologous end joining protein Ku"/>
    <property type="match status" value="1"/>
</dbReference>
<dbReference type="Gene3D" id="2.40.290.10">
    <property type="match status" value="1"/>
</dbReference>
<dbReference type="HAMAP" id="MF_01875">
    <property type="entry name" value="Prokaryotic_Ku"/>
    <property type="match status" value="1"/>
</dbReference>
<dbReference type="InterPro" id="IPR006164">
    <property type="entry name" value="Ku70/Ku80_beta-barrel_dom"/>
</dbReference>
<dbReference type="InterPro" id="IPR009187">
    <property type="entry name" value="Prok_Ku"/>
</dbReference>
<dbReference type="InterPro" id="IPR016194">
    <property type="entry name" value="SPOC-like_C_dom_sf"/>
</dbReference>
<dbReference type="NCBIfam" id="TIGR02772">
    <property type="entry name" value="Ku_bact"/>
    <property type="match status" value="1"/>
</dbReference>
<dbReference type="PANTHER" id="PTHR41251">
    <property type="entry name" value="NON-HOMOLOGOUS END JOINING PROTEIN KU"/>
    <property type="match status" value="1"/>
</dbReference>
<dbReference type="PANTHER" id="PTHR41251:SF1">
    <property type="entry name" value="NON-HOMOLOGOUS END JOINING PROTEIN KU"/>
    <property type="match status" value="1"/>
</dbReference>
<dbReference type="Pfam" id="PF02735">
    <property type="entry name" value="Ku"/>
    <property type="match status" value="1"/>
</dbReference>
<dbReference type="PIRSF" id="PIRSF006493">
    <property type="entry name" value="Prok_Ku"/>
    <property type="match status" value="1"/>
</dbReference>
<dbReference type="SMART" id="SM00559">
    <property type="entry name" value="Ku78"/>
    <property type="match status" value="1"/>
</dbReference>
<dbReference type="SUPFAM" id="SSF100939">
    <property type="entry name" value="SPOC domain-like"/>
    <property type="match status" value="1"/>
</dbReference>
<reference key="1">
    <citation type="journal article" date="2012" name="BMC Microbiol.">
        <title>Genome sequence of Desulfitobacterium hafniense DCB-2, a Gram-positive anaerobe capable of dehalogenation and metal reduction.</title>
        <authorList>
            <person name="Kim S.H."/>
            <person name="Harzman C."/>
            <person name="Davis J.K."/>
            <person name="Hutcheson R."/>
            <person name="Broderick J.B."/>
            <person name="Marsh T.L."/>
            <person name="Tiedje J.M."/>
        </authorList>
    </citation>
    <scope>NUCLEOTIDE SEQUENCE [LARGE SCALE GENOMIC DNA]</scope>
    <source>
        <strain>DSM 10664 / DCB-2</strain>
    </source>
</reference>
<keyword id="KW-0227">DNA damage</keyword>
<keyword id="KW-0233">DNA recombination</keyword>
<keyword id="KW-0234">DNA repair</keyword>
<keyword id="KW-0238">DNA-binding</keyword>
<proteinExistence type="inferred from homology"/>
<feature type="chain" id="PRO_0000389182" description="Non-homologous end joining protein Ku">
    <location>
        <begin position="1"/>
        <end position="285"/>
    </location>
</feature>
<feature type="domain" description="Ku" evidence="1">
    <location>
        <begin position="9"/>
        <end position="176"/>
    </location>
</feature>
<feature type="region of interest" description="Disordered" evidence="2">
    <location>
        <begin position="250"/>
        <end position="285"/>
    </location>
</feature>
<gene>
    <name evidence="1" type="primary">ku</name>
    <name type="ordered locus">Dhaf_3719</name>
</gene>
<sequence>MHTVWKGSISFGLVNVPVKMHAATETHEFHFNYLHKDCHNRIRYIKKCPHCEVEVAAENIIKGYEYEKDHYVIMEEEDLASLEAPLSRSIDILDFIDLSDIDPIYYQKSYYLSPEEAAHKAYKLLCQAMSDTGKVAIAKLTMRSKQHLACLRIIDQSIMVLETMYYPAEIRHLEASWDNVSPTDTEIAMARQLIENLAAPFAPEKYRDELREQVKELIEKKVSGETYRVAAAPEPGKVVDLMEALRASIAMTDQKKQQNTAESETEEKPTKSTLTPRGRRKVKGA</sequence>